<gene>
    <name evidence="1" type="primary">tmk</name>
    <name type="ordered locus">BAMEG_0039</name>
</gene>
<evidence type="ECO:0000255" key="1">
    <source>
        <dbReference type="HAMAP-Rule" id="MF_00165"/>
    </source>
</evidence>
<proteinExistence type="inferred from homology"/>
<sequence length="208" mass="23804">MKGLFVTIEGPEGSGKTTLIQSLLPYFEQKEQKVMATREPGGIAISEDIRTILHKQEYTMMEARTEALLYAAARRQHLVEKVMPALNEDYLVLCDRFIDSSLAYQGYARGLGMDKVFEINRFATEDCMPSLTIYLDIEPEVGLARIAKDAGREVNRLDMEDISFHKRVREGYLQVVERFSDRIVLVNADQPMEKLIEEVIQVIEDKLL</sequence>
<reference key="1">
    <citation type="submission" date="2008-10" db="EMBL/GenBank/DDBJ databases">
        <title>Genome sequence of Bacillus anthracis str. CDC 684.</title>
        <authorList>
            <person name="Dodson R.J."/>
            <person name="Munk A.C."/>
            <person name="Brettin T."/>
            <person name="Bruce D."/>
            <person name="Detter C."/>
            <person name="Tapia R."/>
            <person name="Han C."/>
            <person name="Sutton G."/>
            <person name="Sims D."/>
        </authorList>
    </citation>
    <scope>NUCLEOTIDE SEQUENCE [LARGE SCALE GENOMIC DNA]</scope>
    <source>
        <strain>CDC 684 / NRRL 3495</strain>
    </source>
</reference>
<comment type="function">
    <text evidence="1">Phosphorylation of dTMP to form dTDP in both de novo and salvage pathways of dTTP synthesis.</text>
</comment>
<comment type="catalytic activity">
    <reaction evidence="1">
        <text>dTMP + ATP = dTDP + ADP</text>
        <dbReference type="Rhea" id="RHEA:13517"/>
        <dbReference type="ChEBI" id="CHEBI:30616"/>
        <dbReference type="ChEBI" id="CHEBI:58369"/>
        <dbReference type="ChEBI" id="CHEBI:63528"/>
        <dbReference type="ChEBI" id="CHEBI:456216"/>
        <dbReference type="EC" id="2.7.4.9"/>
    </reaction>
</comment>
<comment type="similarity">
    <text evidence="1">Belongs to the thymidylate kinase family.</text>
</comment>
<feature type="chain" id="PRO_1000123556" description="Thymidylate kinase">
    <location>
        <begin position="1"/>
        <end position="208"/>
    </location>
</feature>
<feature type="binding site" evidence="1">
    <location>
        <begin position="10"/>
        <end position="17"/>
    </location>
    <ligand>
        <name>ATP</name>
        <dbReference type="ChEBI" id="CHEBI:30616"/>
    </ligand>
</feature>
<protein>
    <recommendedName>
        <fullName evidence="1">Thymidylate kinase</fullName>
        <ecNumber evidence="1">2.7.4.9</ecNumber>
    </recommendedName>
    <alternativeName>
        <fullName evidence="1">dTMP kinase</fullName>
    </alternativeName>
</protein>
<keyword id="KW-0067">ATP-binding</keyword>
<keyword id="KW-0418">Kinase</keyword>
<keyword id="KW-0545">Nucleotide biosynthesis</keyword>
<keyword id="KW-0547">Nucleotide-binding</keyword>
<keyword id="KW-0808">Transferase</keyword>
<dbReference type="EC" id="2.7.4.9" evidence="1"/>
<dbReference type="EMBL" id="CP001215">
    <property type="protein sequence ID" value="ACP13366.1"/>
    <property type="molecule type" value="Genomic_DNA"/>
</dbReference>
<dbReference type="RefSeq" id="WP_000677237.1">
    <property type="nucleotide sequence ID" value="NC_012581.1"/>
</dbReference>
<dbReference type="SMR" id="C3LJ02"/>
<dbReference type="GeneID" id="45020070"/>
<dbReference type="KEGG" id="bah:BAMEG_0039"/>
<dbReference type="HOGENOM" id="CLU_049131_0_2_9"/>
<dbReference type="GO" id="GO:0005829">
    <property type="term" value="C:cytosol"/>
    <property type="evidence" value="ECO:0007669"/>
    <property type="project" value="TreeGrafter"/>
</dbReference>
<dbReference type="GO" id="GO:0005524">
    <property type="term" value="F:ATP binding"/>
    <property type="evidence" value="ECO:0007669"/>
    <property type="project" value="UniProtKB-UniRule"/>
</dbReference>
<dbReference type="GO" id="GO:0004798">
    <property type="term" value="F:dTMP kinase activity"/>
    <property type="evidence" value="ECO:0007669"/>
    <property type="project" value="UniProtKB-UniRule"/>
</dbReference>
<dbReference type="GO" id="GO:0006233">
    <property type="term" value="P:dTDP biosynthetic process"/>
    <property type="evidence" value="ECO:0007669"/>
    <property type="project" value="InterPro"/>
</dbReference>
<dbReference type="GO" id="GO:0006235">
    <property type="term" value="P:dTTP biosynthetic process"/>
    <property type="evidence" value="ECO:0007669"/>
    <property type="project" value="UniProtKB-UniRule"/>
</dbReference>
<dbReference type="GO" id="GO:0006227">
    <property type="term" value="P:dUDP biosynthetic process"/>
    <property type="evidence" value="ECO:0007669"/>
    <property type="project" value="TreeGrafter"/>
</dbReference>
<dbReference type="CDD" id="cd01672">
    <property type="entry name" value="TMPK"/>
    <property type="match status" value="1"/>
</dbReference>
<dbReference type="FunFam" id="3.40.50.300:FF:000225">
    <property type="entry name" value="Thymidylate kinase"/>
    <property type="match status" value="1"/>
</dbReference>
<dbReference type="Gene3D" id="3.40.50.300">
    <property type="entry name" value="P-loop containing nucleotide triphosphate hydrolases"/>
    <property type="match status" value="1"/>
</dbReference>
<dbReference type="HAMAP" id="MF_00165">
    <property type="entry name" value="Thymidylate_kinase"/>
    <property type="match status" value="1"/>
</dbReference>
<dbReference type="InterPro" id="IPR027417">
    <property type="entry name" value="P-loop_NTPase"/>
</dbReference>
<dbReference type="InterPro" id="IPR039430">
    <property type="entry name" value="Thymidylate_kin-like_dom"/>
</dbReference>
<dbReference type="InterPro" id="IPR018095">
    <property type="entry name" value="Thymidylate_kin_CS"/>
</dbReference>
<dbReference type="InterPro" id="IPR018094">
    <property type="entry name" value="Thymidylate_kinase"/>
</dbReference>
<dbReference type="NCBIfam" id="TIGR00041">
    <property type="entry name" value="DTMP_kinase"/>
    <property type="match status" value="1"/>
</dbReference>
<dbReference type="PANTHER" id="PTHR10344">
    <property type="entry name" value="THYMIDYLATE KINASE"/>
    <property type="match status" value="1"/>
</dbReference>
<dbReference type="PANTHER" id="PTHR10344:SF4">
    <property type="entry name" value="UMP-CMP KINASE 2, MITOCHONDRIAL"/>
    <property type="match status" value="1"/>
</dbReference>
<dbReference type="Pfam" id="PF02223">
    <property type="entry name" value="Thymidylate_kin"/>
    <property type="match status" value="1"/>
</dbReference>
<dbReference type="SUPFAM" id="SSF52540">
    <property type="entry name" value="P-loop containing nucleoside triphosphate hydrolases"/>
    <property type="match status" value="1"/>
</dbReference>
<dbReference type="PROSITE" id="PS01331">
    <property type="entry name" value="THYMIDYLATE_KINASE"/>
    <property type="match status" value="1"/>
</dbReference>
<accession>C3LJ02</accession>
<organism>
    <name type="scientific">Bacillus anthracis (strain CDC 684 / NRRL 3495)</name>
    <dbReference type="NCBI Taxonomy" id="568206"/>
    <lineage>
        <taxon>Bacteria</taxon>
        <taxon>Bacillati</taxon>
        <taxon>Bacillota</taxon>
        <taxon>Bacilli</taxon>
        <taxon>Bacillales</taxon>
        <taxon>Bacillaceae</taxon>
        <taxon>Bacillus</taxon>
        <taxon>Bacillus cereus group</taxon>
    </lineage>
</organism>
<name>KTHY_BACAC</name>